<name>ERBB2_MOUSE</name>
<reference key="1">
    <citation type="journal article" date="2003" name="DNA Res.">
        <title>Prediction of the coding sequences of mouse homologues of KIAA gene: III. The complete nucleotide sequences of 500 mouse KIAA-homologous cDNAs identified by screening of terminal sequences of cDNA clones randomly sampled from size-fractionated libraries.</title>
        <authorList>
            <person name="Okazaki N."/>
            <person name="Kikuno R."/>
            <person name="Ohara R."/>
            <person name="Inamoto S."/>
            <person name="Koseki H."/>
            <person name="Hiraoka S."/>
            <person name="Saga Y."/>
            <person name="Nagase T."/>
            <person name="Ohara O."/>
            <person name="Koga H."/>
        </authorList>
    </citation>
    <scope>NUCLEOTIDE SEQUENCE [LARGE SCALE MRNA]</scope>
    <source>
        <tissue>Embryonic tail</tissue>
    </source>
</reference>
<reference key="2">
    <citation type="journal article" date="1997" name="Endocrinology">
        <title>Differential expression of the erbB2 gene in the periimplantation mouse uterus: potential mediator of signaling by epidermal growth factor-like growth factors.</title>
        <authorList>
            <person name="Lim J."/>
            <person name="Dey S.K."/>
            <person name="Das S.K."/>
        </authorList>
    </citation>
    <scope>NUCLEOTIDE SEQUENCE [MRNA] OF 786-934</scope>
    <source>
        <strain>CD-1</strain>
        <tissue>Uterus</tissue>
    </source>
</reference>
<reference key="3">
    <citation type="journal article" date="1995" name="Dev. Biol.">
        <title>Synapse-associated expression of an acetylcholine receptor-inducing protein, ARIA/heregulin, and its putative receptors, ErbB2 and ErbB3, in developing mammalian muscle.</title>
        <authorList>
            <person name="Moscoso L.M."/>
            <person name="Chu G.C."/>
            <person name="Gautam M."/>
            <person name="Noakes P.G."/>
            <person name="Merlie J.P."/>
            <person name="Sanes J.R."/>
        </authorList>
    </citation>
    <scope>NUCLEOTIDE SEQUENCE [MRNA] OF 1012-1107</scope>
</reference>
<reference key="4">
    <citation type="journal article" date="1995" name="Oncogene">
        <title>Direct and specific interaction of c-Src with Neu is involved in signaling by the epidermal growth factor receptor.</title>
        <authorList>
            <person name="Muthuswamy S.K."/>
            <person name="Muller W.J."/>
        </authorList>
    </citation>
    <scope>FUNCTION</scope>
    <scope>INTERACTION WITH SRC</scope>
</reference>
<reference key="5">
    <citation type="journal article" date="2001" name="J. Biol. Chem.">
        <title>The ERBB2/HER2 receptor differentially interacts with ERBIN and PICK1 PSD-95/DLG/ZO-1 domain proteins.</title>
        <authorList>
            <person name="Jaulin-Bastard F."/>
            <person name="Saito H."/>
            <person name="Le Bivic A."/>
            <person name="Ollendorff V."/>
            <person name="Marchetto S."/>
            <person name="Birnbaum D."/>
            <person name="Borg J.-P."/>
        </authorList>
    </citation>
    <scope>INTERACTION WITH PRKCABP</scope>
</reference>
<reference key="6">
    <citation type="journal article" date="2010" name="Cell">
        <title>A tissue-specific atlas of mouse protein phosphorylation and expression.</title>
        <authorList>
            <person name="Huttlin E.L."/>
            <person name="Jedrychowski M.P."/>
            <person name="Elias J.E."/>
            <person name="Goswami T."/>
            <person name="Rad R."/>
            <person name="Beausoleil S.A."/>
            <person name="Villen J."/>
            <person name="Haas W."/>
            <person name="Sowa M.E."/>
            <person name="Gygi S.P."/>
        </authorList>
    </citation>
    <scope>IDENTIFICATION BY MASS SPECTROMETRY [LARGE SCALE ANALYSIS]</scope>
    <source>
        <tissue>Lung</tissue>
    </source>
</reference>
<reference key="7">
    <citation type="journal article" date="2013" name="J. Biol. Chem.">
        <title>Myocilin mediates myelination in the peripheral nervous system through ErbB2/3 signaling.</title>
        <authorList>
            <person name="Kwon H.S."/>
            <person name="Johnson T.V."/>
            <person name="Joe M.K."/>
            <person name="Abu-Asab M."/>
            <person name="Zhang J."/>
            <person name="Chan C.C."/>
            <person name="Tomarev S.I."/>
        </authorList>
    </citation>
    <scope>INTERACTION WITH MYOC</scope>
</reference>
<protein>
    <recommendedName>
        <fullName>Receptor tyrosine-protein kinase erbB-2</fullName>
        <ecNumber>2.7.10.1</ecNumber>
    </recommendedName>
    <alternativeName>
        <fullName>Proto-oncogene Neu</fullName>
    </alternativeName>
    <alternativeName>
        <fullName>Proto-oncogene c-ErbB-2</fullName>
    </alternativeName>
    <alternativeName>
        <fullName>p185erbB2</fullName>
    </alternativeName>
    <cdAntigenName>CD340</cdAntigenName>
</protein>
<proteinExistence type="evidence at protein level"/>
<organism>
    <name type="scientific">Mus musculus</name>
    <name type="common">Mouse</name>
    <dbReference type="NCBI Taxonomy" id="10090"/>
    <lineage>
        <taxon>Eukaryota</taxon>
        <taxon>Metazoa</taxon>
        <taxon>Chordata</taxon>
        <taxon>Craniata</taxon>
        <taxon>Vertebrata</taxon>
        <taxon>Euteleostomi</taxon>
        <taxon>Mammalia</taxon>
        <taxon>Eutheria</taxon>
        <taxon>Euarchontoglires</taxon>
        <taxon>Glires</taxon>
        <taxon>Rodentia</taxon>
        <taxon>Myomorpha</taxon>
        <taxon>Muroidea</taxon>
        <taxon>Muridae</taxon>
        <taxon>Murinae</taxon>
        <taxon>Mus</taxon>
        <taxon>Mus</taxon>
    </lineage>
</organism>
<sequence>MELAAWCRWGFLLALLSPGAAGTQVCTGTDMKLRLPASPETHLDMLRHLYQGCQVVQGNLELTYLPANASLSFLQDIQEVQGYMLIAHNRVKHVPLQRLRIVRGTQLFEDKYALAVLDNRDPLDNVTTAAPGRTPEGLRELQLRSLTEILKGGVLIRGNPQLCYQDMVLWKDVLRKNNQLAPVDMDTNRSRACPPCAPTCKDNHCWGESPEDCQILTGTICTSGCARCKGRLPTDCCHEQCAAGCTGPKHSDCLACLHFNHSGICELHCPALITYNTDTFESMLNPEGRYTFGASCVTTCPYNYLSTEVGSCTLVCPPNNQEVTAEDGTQRCEKCSKPCAGVCYGLGMEHLRGARAITSDNIQEFAGCKKIFGSLAFLPESFDGNPSSGVAPLKPEHLQVFETLEEITGYLYISAWPESFQDLSVFQNLRVIRGRILHDGAYSLTLQGLGIHSLGLRSLRELGSGLALIHRNTHLCFVNTVPWDQLFRNPHQALLHSGNRPEEACGLEGLVCNSLCARGHCWGPGPTQCVNCSQFLRGQECVEECRVWKGLPREYVRGKHCLPCHPECQPQNSSETCYGSEADQCEACAHYKDSSSCVARCPSGVKPDLSYMPIWKYPDEEGICQPCPINCTHSCVDLDERGCPAEQRASPVTFIIATVVGVLLFLIIVVVIGILIKRRRQKIRKYTMRRLLQETELVEPLTPSGAVPNQAQMRILKETELRKLKVLGSGAFGTVYKGIWIPDGENVKIPVAIKVLRENTSPKANKEILDEAYVMAGVGSPYVSRLLGICLTSTVQLVTQLMPYGCLLDHVREHRGRLGSQDLLNWCVQIAKGMSYLEEVRLVHRDLAARNVLVKSPNHVKITDFGLARLLDIDETEYHADGGKVPIKWMALESILRRRFTHQSDVWSYGVTVWELMTFGAKPYDGIPAREIPDLLEKGERLPQPPICTIDVYMIMVKCWMIDSECRPRFRELVSEFSRMARDPQRFVVIQNEDLGPSSPMDSTFYRSLLEDDDMGELVDAEEYLVPQQGFFSPDPALGTGSTAHRRHRSSSARSGGGELTLGLEPSEEEPPRSPLAPSEGAGSDVFDGDLAVGVTKGLQSLSPHDLSPLQRYSEDPTLPLPPETDGYVAPLACSPQPEYVNQPEVRPQSPLTPEGPPPPIRPAGATLERPKTLSPGKNGVVKDVFAFGGAVENPEYLAPRAGTASQPHPSPAFSPAFDNLYYWDQNSSEQGPPPSTFEGTPTAENPEYLGLDVPV</sequence>
<dbReference type="EC" id="2.7.10.1"/>
<dbReference type="EMBL" id="AK129487">
    <property type="protein sequence ID" value="BAC98297.1"/>
    <property type="status" value="ALT_INIT"/>
    <property type="molecule type" value="mRNA"/>
</dbReference>
<dbReference type="EMBL" id="U71126">
    <property type="protein sequence ID" value="AAB17380.1"/>
    <property type="molecule type" value="mRNA"/>
</dbReference>
<dbReference type="EMBL" id="L47239">
    <property type="protein sequence ID" value="AAA93532.1"/>
    <property type="molecule type" value="mRNA"/>
</dbReference>
<dbReference type="CCDS" id="CCDS25349.1"/>
<dbReference type="RefSeq" id="NP_001003817.1">
    <property type="nucleotide sequence ID" value="NM_001003817.1"/>
</dbReference>
<dbReference type="SMR" id="P70424"/>
<dbReference type="BioGRID" id="199496">
    <property type="interactions" value="9"/>
</dbReference>
<dbReference type="DIP" id="DIP-40912N"/>
<dbReference type="FunCoup" id="P70424">
    <property type="interactions" value="1527"/>
</dbReference>
<dbReference type="IntAct" id="P70424">
    <property type="interactions" value="6"/>
</dbReference>
<dbReference type="MINT" id="P70424"/>
<dbReference type="STRING" id="10090.ENSMUSP00000053897"/>
<dbReference type="ChEMBL" id="CHEMBL2311234"/>
<dbReference type="GlyCosmos" id="P70424">
    <property type="glycosylation" value="7 sites, No reported glycans"/>
</dbReference>
<dbReference type="GlyGen" id="P70424">
    <property type="glycosylation" value="8 sites, 3 N-linked glycans (3 sites)"/>
</dbReference>
<dbReference type="iPTMnet" id="P70424"/>
<dbReference type="PhosphoSitePlus" id="P70424"/>
<dbReference type="jPOST" id="P70424"/>
<dbReference type="PaxDb" id="10090-ENSMUSP00000053897"/>
<dbReference type="PeptideAtlas" id="P70424"/>
<dbReference type="ProteomicsDB" id="275937"/>
<dbReference type="Pumba" id="P70424"/>
<dbReference type="ABCD" id="P70424">
    <property type="antibodies" value="4 sequenced antibodies"/>
</dbReference>
<dbReference type="Antibodypedia" id="740">
    <property type="antibodies" value="6638 antibodies from 63 providers"/>
</dbReference>
<dbReference type="DNASU" id="13866"/>
<dbReference type="Ensembl" id="ENSMUST00000058295.6">
    <property type="protein sequence ID" value="ENSMUSP00000053897.6"/>
    <property type="gene ID" value="ENSMUSG00000062312.6"/>
</dbReference>
<dbReference type="GeneID" id="13866"/>
<dbReference type="KEGG" id="mmu:13866"/>
<dbReference type="UCSC" id="uc007lgi.1">
    <property type="organism name" value="mouse"/>
</dbReference>
<dbReference type="AGR" id="MGI:95410"/>
<dbReference type="CTD" id="2064"/>
<dbReference type="MGI" id="MGI:95410">
    <property type="gene designation" value="Erbb2"/>
</dbReference>
<dbReference type="VEuPathDB" id="HostDB:ENSMUSG00000062312"/>
<dbReference type="eggNOG" id="KOG1025">
    <property type="taxonomic scope" value="Eukaryota"/>
</dbReference>
<dbReference type="GeneTree" id="ENSGT00940000158232"/>
<dbReference type="HOGENOM" id="CLU_003384_1_1_1"/>
<dbReference type="InParanoid" id="P70424"/>
<dbReference type="OMA" id="DRHCLPC"/>
<dbReference type="OrthoDB" id="6219513at2759"/>
<dbReference type="PhylomeDB" id="P70424"/>
<dbReference type="TreeFam" id="TF106002"/>
<dbReference type="BRENDA" id="2.7.10.1">
    <property type="organism ID" value="3474"/>
</dbReference>
<dbReference type="Reactome" id="R-MMU-1227986">
    <property type="pathway name" value="Signaling by ERBB2"/>
</dbReference>
<dbReference type="Reactome" id="R-MMU-1250196">
    <property type="pathway name" value="SHC1 events in ERBB2 signaling"/>
</dbReference>
<dbReference type="Reactome" id="R-MMU-1257604">
    <property type="pathway name" value="PIP3 activates AKT signaling"/>
</dbReference>
<dbReference type="Reactome" id="R-MMU-1306955">
    <property type="pathway name" value="GRB7 events in ERBB2 signaling"/>
</dbReference>
<dbReference type="Reactome" id="R-MMU-1358803">
    <property type="pathway name" value="Downregulation of ERBB2:ERBB3 signaling"/>
</dbReference>
<dbReference type="Reactome" id="R-MMU-1963640">
    <property type="pathway name" value="GRB2 events in ERBB2 signaling"/>
</dbReference>
<dbReference type="Reactome" id="R-MMU-1963642">
    <property type="pathway name" value="PI3K events in ERBB2 signaling"/>
</dbReference>
<dbReference type="Reactome" id="R-MMU-416572">
    <property type="pathway name" value="Sema4D induced cell migration and growth-cone collapse"/>
</dbReference>
<dbReference type="Reactome" id="R-MMU-5673001">
    <property type="pathway name" value="RAF/MAP kinase cascade"/>
</dbReference>
<dbReference type="Reactome" id="R-MMU-6785631">
    <property type="pathway name" value="ERBB2 Regulates Cell Motility"/>
</dbReference>
<dbReference type="Reactome" id="R-MMU-6811558">
    <property type="pathway name" value="PI5P, PP2A and IER3 Regulate PI3K/AKT Signaling"/>
</dbReference>
<dbReference type="Reactome" id="R-MMU-8847993">
    <property type="pathway name" value="ERBB2 Activates PTK6 Signaling"/>
</dbReference>
<dbReference type="Reactome" id="R-MMU-8863795">
    <property type="pathway name" value="Downregulation of ERBB2 signaling"/>
</dbReference>
<dbReference type="Reactome" id="R-MMU-9652282">
    <property type="pathway name" value="Drug-mediated inhibition of ERBB2 signaling"/>
</dbReference>
<dbReference type="BioGRID-ORCS" id="13866">
    <property type="hits" value="4 hits in 79 CRISPR screens"/>
</dbReference>
<dbReference type="ChiTaRS" id="Erbb2">
    <property type="organism name" value="mouse"/>
</dbReference>
<dbReference type="PRO" id="PR:P70424"/>
<dbReference type="Proteomes" id="UP000000589">
    <property type="component" value="Chromosome 11"/>
</dbReference>
<dbReference type="RNAct" id="P70424">
    <property type="molecule type" value="protein"/>
</dbReference>
<dbReference type="Bgee" id="ENSMUSG00000062312">
    <property type="expression patterns" value="Expressed in dorsal pancreas and 204 other cell types or tissues"/>
</dbReference>
<dbReference type="GO" id="GO:0016324">
    <property type="term" value="C:apical plasma membrane"/>
    <property type="evidence" value="ECO:0000314"/>
    <property type="project" value="MGI"/>
</dbReference>
<dbReference type="GO" id="GO:0016323">
    <property type="term" value="C:basolateral plasma membrane"/>
    <property type="evidence" value="ECO:0007669"/>
    <property type="project" value="Ensembl"/>
</dbReference>
<dbReference type="GO" id="GO:0005737">
    <property type="term" value="C:cytoplasm"/>
    <property type="evidence" value="ECO:0000314"/>
    <property type="project" value="MGI"/>
</dbReference>
<dbReference type="GO" id="GO:0031410">
    <property type="term" value="C:cytoplasmic vesicle"/>
    <property type="evidence" value="ECO:0000314"/>
    <property type="project" value="MGI"/>
</dbReference>
<dbReference type="GO" id="GO:0005829">
    <property type="term" value="C:cytosol"/>
    <property type="evidence" value="ECO:0007669"/>
    <property type="project" value="Ensembl"/>
</dbReference>
<dbReference type="GO" id="GO:0005769">
    <property type="term" value="C:early endosome"/>
    <property type="evidence" value="ECO:0007669"/>
    <property type="project" value="UniProtKB-SubCell"/>
</dbReference>
<dbReference type="GO" id="GO:0010008">
    <property type="term" value="C:endosome membrane"/>
    <property type="evidence" value="ECO:0007669"/>
    <property type="project" value="Ensembl"/>
</dbReference>
<dbReference type="GO" id="GO:0038143">
    <property type="term" value="C:ERBB3:ERBB2 complex"/>
    <property type="evidence" value="ECO:0007669"/>
    <property type="project" value="Ensembl"/>
</dbReference>
<dbReference type="GO" id="GO:0016020">
    <property type="term" value="C:membrane"/>
    <property type="evidence" value="ECO:0000303"/>
    <property type="project" value="UniProtKB"/>
</dbReference>
<dbReference type="GO" id="GO:0043209">
    <property type="term" value="C:myelin sheath"/>
    <property type="evidence" value="ECO:0000314"/>
    <property type="project" value="MGI"/>
</dbReference>
<dbReference type="GO" id="GO:0031594">
    <property type="term" value="C:neuromuscular junction"/>
    <property type="evidence" value="ECO:0000314"/>
    <property type="project" value="SynGO"/>
</dbReference>
<dbReference type="GO" id="GO:0005654">
    <property type="term" value="C:nucleoplasm"/>
    <property type="evidence" value="ECO:0007669"/>
    <property type="project" value="Ensembl"/>
</dbReference>
<dbReference type="GO" id="GO:0048471">
    <property type="term" value="C:perinuclear region of cytoplasm"/>
    <property type="evidence" value="ECO:0007669"/>
    <property type="project" value="UniProtKB-SubCell"/>
</dbReference>
<dbReference type="GO" id="GO:0005886">
    <property type="term" value="C:plasma membrane"/>
    <property type="evidence" value="ECO:0000314"/>
    <property type="project" value="MGI"/>
</dbReference>
<dbReference type="GO" id="GO:0042734">
    <property type="term" value="C:presynaptic membrane"/>
    <property type="evidence" value="ECO:0000314"/>
    <property type="project" value="SynGO"/>
</dbReference>
<dbReference type="GO" id="GO:0043235">
    <property type="term" value="C:receptor complex"/>
    <property type="evidence" value="ECO:0000266"/>
    <property type="project" value="MGI"/>
</dbReference>
<dbReference type="GO" id="GO:0032587">
    <property type="term" value="C:ruffle membrane"/>
    <property type="evidence" value="ECO:0007669"/>
    <property type="project" value="UniProtKB-SubCell"/>
</dbReference>
<dbReference type="GO" id="GO:0002116">
    <property type="term" value="C:semaphorin receptor complex"/>
    <property type="evidence" value="ECO:0000315"/>
    <property type="project" value="BHF-UCL"/>
</dbReference>
<dbReference type="GO" id="GO:0005524">
    <property type="term" value="F:ATP binding"/>
    <property type="evidence" value="ECO:0007669"/>
    <property type="project" value="UniProtKB-KW"/>
</dbReference>
<dbReference type="GO" id="GO:0015026">
    <property type="term" value="F:coreceptor activity"/>
    <property type="evidence" value="ECO:0000315"/>
    <property type="project" value="BHF-UCL"/>
</dbReference>
<dbReference type="GO" id="GO:0043125">
    <property type="term" value="F:ErbB-3 class receptor binding"/>
    <property type="evidence" value="ECO:0007669"/>
    <property type="project" value="Ensembl"/>
</dbReference>
<dbReference type="GO" id="GO:0019838">
    <property type="term" value="F:growth factor binding"/>
    <property type="evidence" value="ECO:0007669"/>
    <property type="project" value="Ensembl"/>
</dbReference>
<dbReference type="GO" id="GO:0042802">
    <property type="term" value="F:identical protein binding"/>
    <property type="evidence" value="ECO:0007669"/>
    <property type="project" value="Ensembl"/>
</dbReference>
<dbReference type="GO" id="GO:0046982">
    <property type="term" value="F:protein heterodimerization activity"/>
    <property type="evidence" value="ECO:0007669"/>
    <property type="project" value="Ensembl"/>
</dbReference>
<dbReference type="GO" id="GO:0004713">
    <property type="term" value="F:protein tyrosine kinase activity"/>
    <property type="evidence" value="ECO:0000314"/>
    <property type="project" value="MGI"/>
</dbReference>
<dbReference type="GO" id="GO:0030971">
    <property type="term" value="F:receptor tyrosine kinase binding"/>
    <property type="evidence" value="ECO:0007669"/>
    <property type="project" value="Ensembl"/>
</dbReference>
<dbReference type="GO" id="GO:0001042">
    <property type="term" value="F:RNA polymerase I core binding"/>
    <property type="evidence" value="ECO:0000250"/>
    <property type="project" value="UniProtKB"/>
</dbReference>
<dbReference type="GO" id="GO:0004714">
    <property type="term" value="F:transmembrane receptor protein tyrosine kinase activity"/>
    <property type="evidence" value="ECO:0000250"/>
    <property type="project" value="BHF-UCL"/>
</dbReference>
<dbReference type="GO" id="GO:0007169">
    <property type="term" value="P:cell surface receptor protein tyrosine kinase signaling pathway"/>
    <property type="evidence" value="ECO:0000250"/>
    <property type="project" value="BHF-UCL"/>
</dbReference>
<dbReference type="GO" id="GO:0007166">
    <property type="term" value="P:cell surface receptor signaling pathway"/>
    <property type="evidence" value="ECO:0000266"/>
    <property type="project" value="MGI"/>
</dbReference>
<dbReference type="GO" id="GO:0071364">
    <property type="term" value="P:cellular response to epidermal growth factor stimulus"/>
    <property type="evidence" value="ECO:0000250"/>
    <property type="project" value="UniProtKB"/>
</dbReference>
<dbReference type="GO" id="GO:0071363">
    <property type="term" value="P:cellular response to growth factor stimulus"/>
    <property type="evidence" value="ECO:0000250"/>
    <property type="project" value="UniProtKB"/>
</dbReference>
<dbReference type="GO" id="GO:0038134">
    <property type="term" value="P:ERBB2-EGFR signaling pathway"/>
    <property type="evidence" value="ECO:0000314"/>
    <property type="project" value="MGI"/>
</dbReference>
<dbReference type="GO" id="GO:0038133">
    <property type="term" value="P:ERBB2-ERBB3 signaling pathway"/>
    <property type="evidence" value="ECO:0000314"/>
    <property type="project" value="MGI"/>
</dbReference>
<dbReference type="GO" id="GO:0038135">
    <property type="term" value="P:ERBB2-ERBB4 signaling pathway"/>
    <property type="evidence" value="ECO:0000314"/>
    <property type="project" value="MGI"/>
</dbReference>
<dbReference type="GO" id="GO:0007507">
    <property type="term" value="P:heart development"/>
    <property type="evidence" value="ECO:0000315"/>
    <property type="project" value="MGI"/>
</dbReference>
<dbReference type="GO" id="GO:0033080">
    <property type="term" value="P:immature T cell proliferation in thymus"/>
    <property type="evidence" value="ECO:0000315"/>
    <property type="project" value="MGI"/>
</dbReference>
<dbReference type="GO" id="GO:0035556">
    <property type="term" value="P:intracellular signal transduction"/>
    <property type="evidence" value="ECO:0000250"/>
    <property type="project" value="UniProtKB"/>
</dbReference>
<dbReference type="GO" id="GO:0008045">
    <property type="term" value="P:motor neuron axon guidance"/>
    <property type="evidence" value="ECO:0000315"/>
    <property type="project" value="MGI"/>
</dbReference>
<dbReference type="GO" id="GO:0042552">
    <property type="term" value="P:myelination"/>
    <property type="evidence" value="ECO:0000315"/>
    <property type="project" value="MGI"/>
</dbReference>
<dbReference type="GO" id="GO:0033088">
    <property type="term" value="P:negative regulation of immature T cell proliferation in thymus"/>
    <property type="evidence" value="ECO:0000315"/>
    <property type="project" value="MGI"/>
</dbReference>
<dbReference type="GO" id="GO:0007399">
    <property type="term" value="P:nervous system development"/>
    <property type="evidence" value="ECO:0000315"/>
    <property type="project" value="MGI"/>
</dbReference>
<dbReference type="GO" id="GO:0007528">
    <property type="term" value="P:neuromuscular junction development"/>
    <property type="evidence" value="ECO:0000315"/>
    <property type="project" value="MGI"/>
</dbReference>
<dbReference type="GO" id="GO:0099645">
    <property type="term" value="P:neurotransmitter receptor localization to postsynaptic specialization membrane"/>
    <property type="evidence" value="ECO:0000314"/>
    <property type="project" value="SynGO"/>
</dbReference>
<dbReference type="GO" id="GO:0048709">
    <property type="term" value="P:oligodendrocyte differentiation"/>
    <property type="evidence" value="ECO:0000315"/>
    <property type="project" value="MGI"/>
</dbReference>
<dbReference type="GO" id="GO:0007422">
    <property type="term" value="P:peripheral nervous system development"/>
    <property type="evidence" value="ECO:0000315"/>
    <property type="project" value="MGI"/>
</dbReference>
<dbReference type="GO" id="GO:0043491">
    <property type="term" value="P:phosphatidylinositol 3-kinase/protein kinase B signal transduction"/>
    <property type="evidence" value="ECO:0007669"/>
    <property type="project" value="Ensembl"/>
</dbReference>
<dbReference type="GO" id="GO:0045785">
    <property type="term" value="P:positive regulation of cell adhesion"/>
    <property type="evidence" value="ECO:0007669"/>
    <property type="project" value="Ensembl"/>
</dbReference>
<dbReference type="GO" id="GO:0030307">
    <property type="term" value="P:positive regulation of cell growth"/>
    <property type="evidence" value="ECO:0000250"/>
    <property type="project" value="UniProtKB"/>
</dbReference>
<dbReference type="GO" id="GO:0050679">
    <property type="term" value="P:positive regulation of epithelial cell proliferation"/>
    <property type="evidence" value="ECO:0007669"/>
    <property type="project" value="Ensembl"/>
</dbReference>
<dbReference type="GO" id="GO:0010628">
    <property type="term" value="P:positive regulation of gene expression"/>
    <property type="evidence" value="ECO:0000315"/>
    <property type="project" value="MGI"/>
</dbReference>
<dbReference type="GO" id="GO:0090314">
    <property type="term" value="P:positive regulation of protein targeting to membrane"/>
    <property type="evidence" value="ECO:0000250"/>
    <property type="project" value="UniProtKB"/>
</dbReference>
<dbReference type="GO" id="GO:0035025">
    <property type="term" value="P:positive regulation of Rho protein signal transduction"/>
    <property type="evidence" value="ECO:0000315"/>
    <property type="project" value="BHF-UCL"/>
</dbReference>
<dbReference type="GO" id="GO:0045943">
    <property type="term" value="P:positive regulation of transcription by RNA polymerase I"/>
    <property type="evidence" value="ECO:0000250"/>
    <property type="project" value="UniProtKB"/>
</dbReference>
<dbReference type="GO" id="GO:0045727">
    <property type="term" value="P:positive regulation of translation"/>
    <property type="evidence" value="ECO:0000250"/>
    <property type="project" value="UniProtKB"/>
</dbReference>
<dbReference type="GO" id="GO:0070372">
    <property type="term" value="P:regulation of ERK1 and ERK2 cascade"/>
    <property type="evidence" value="ECO:0000250"/>
    <property type="project" value="UniProtKB"/>
</dbReference>
<dbReference type="GO" id="GO:0032886">
    <property type="term" value="P:regulation of microtubule-based process"/>
    <property type="evidence" value="ECO:0000250"/>
    <property type="project" value="UniProtKB"/>
</dbReference>
<dbReference type="GO" id="GO:0014044">
    <property type="term" value="P:Schwann cell development"/>
    <property type="evidence" value="ECO:0000315"/>
    <property type="project" value="MGI"/>
</dbReference>
<dbReference type="GO" id="GO:0071526">
    <property type="term" value="P:semaphorin-plexin signaling pathway"/>
    <property type="evidence" value="ECO:0000315"/>
    <property type="project" value="BHF-UCL"/>
</dbReference>
<dbReference type="GO" id="GO:0042060">
    <property type="term" value="P:wound healing"/>
    <property type="evidence" value="ECO:0007669"/>
    <property type="project" value="Ensembl"/>
</dbReference>
<dbReference type="CDD" id="cd00064">
    <property type="entry name" value="FU"/>
    <property type="match status" value="3"/>
</dbReference>
<dbReference type="CDD" id="cd05109">
    <property type="entry name" value="PTKc_HER2"/>
    <property type="match status" value="1"/>
</dbReference>
<dbReference type="CDD" id="cd12094">
    <property type="entry name" value="TM_ErbB2"/>
    <property type="match status" value="1"/>
</dbReference>
<dbReference type="FunFam" id="1.20.5.100:FF:000007">
    <property type="entry name" value="Receptor protein-tyrosine kinase"/>
    <property type="match status" value="1"/>
</dbReference>
<dbReference type="FunFam" id="2.10.220.10:FF:000009">
    <property type="entry name" value="Receptor protein-tyrosine kinase"/>
    <property type="match status" value="1"/>
</dbReference>
<dbReference type="FunFam" id="2.10.220.10:FF:000010">
    <property type="entry name" value="Receptor protein-tyrosine kinase"/>
    <property type="match status" value="1"/>
</dbReference>
<dbReference type="FunFam" id="3.30.200.20:FF:000184">
    <property type="entry name" value="Receptor protein-tyrosine kinase"/>
    <property type="match status" value="1"/>
</dbReference>
<dbReference type="FunFam" id="3.80.20.20:FF:000007">
    <property type="entry name" value="Receptor protein-tyrosine kinase"/>
    <property type="match status" value="1"/>
</dbReference>
<dbReference type="FunFam" id="3.80.20.20:FF:000008">
    <property type="entry name" value="Receptor protein-tyrosine kinase"/>
    <property type="match status" value="1"/>
</dbReference>
<dbReference type="FunFam" id="4.10.1140.10:FF:000001">
    <property type="entry name" value="Receptor protein-tyrosine kinase"/>
    <property type="match status" value="1"/>
</dbReference>
<dbReference type="FunFam" id="1.10.510.10:FF:002828">
    <property type="entry name" value="Receptor tyrosine-protein kinase erbB-2"/>
    <property type="match status" value="1"/>
</dbReference>
<dbReference type="Gene3D" id="1.20.5.100">
    <property type="entry name" value="Cytochrome c1, transmembrane anchor, C-terminal"/>
    <property type="match status" value="1"/>
</dbReference>
<dbReference type="Gene3D" id="2.10.220.10">
    <property type="entry name" value="Hormone Receptor, Insulin-like Growth Factor Receptor 1, Chain A, domain 2"/>
    <property type="match status" value="3"/>
</dbReference>
<dbReference type="Gene3D" id="4.10.1140.10">
    <property type="entry name" value="membrane-bound form of the juxtamembrane domain of the epidermal growth factor receptor like domain"/>
    <property type="match status" value="1"/>
</dbReference>
<dbReference type="Gene3D" id="3.30.200.20">
    <property type="entry name" value="Phosphorylase Kinase, domain 1"/>
    <property type="match status" value="1"/>
</dbReference>
<dbReference type="Gene3D" id="3.80.20.20">
    <property type="entry name" value="Receptor L-domain"/>
    <property type="match status" value="2"/>
</dbReference>
<dbReference type="Gene3D" id="1.10.510.10">
    <property type="entry name" value="Transferase(Phosphotransferase) domain 1"/>
    <property type="match status" value="1"/>
</dbReference>
<dbReference type="InterPro" id="IPR006211">
    <property type="entry name" value="Furin-like_Cys-rich_dom"/>
</dbReference>
<dbReference type="InterPro" id="IPR006212">
    <property type="entry name" value="Furin_repeat"/>
</dbReference>
<dbReference type="InterPro" id="IPR032778">
    <property type="entry name" value="GF_recep_IV"/>
</dbReference>
<dbReference type="InterPro" id="IPR009030">
    <property type="entry name" value="Growth_fac_rcpt_cys_sf"/>
</dbReference>
<dbReference type="InterPro" id="IPR011009">
    <property type="entry name" value="Kinase-like_dom_sf"/>
</dbReference>
<dbReference type="InterPro" id="IPR000719">
    <property type="entry name" value="Prot_kinase_dom"/>
</dbReference>
<dbReference type="InterPro" id="IPR017441">
    <property type="entry name" value="Protein_kinase_ATP_BS"/>
</dbReference>
<dbReference type="InterPro" id="IPR000494">
    <property type="entry name" value="Rcpt_L-dom"/>
</dbReference>
<dbReference type="InterPro" id="IPR036941">
    <property type="entry name" value="Rcpt_L-dom_sf"/>
</dbReference>
<dbReference type="InterPro" id="IPR050122">
    <property type="entry name" value="RTK"/>
</dbReference>
<dbReference type="InterPro" id="IPR001245">
    <property type="entry name" value="Ser-Thr/Tyr_kinase_cat_dom"/>
</dbReference>
<dbReference type="InterPro" id="IPR049328">
    <property type="entry name" value="TM_ErbB1"/>
</dbReference>
<dbReference type="InterPro" id="IPR008266">
    <property type="entry name" value="Tyr_kinase_AS"/>
</dbReference>
<dbReference type="InterPro" id="IPR020635">
    <property type="entry name" value="Tyr_kinase_cat_dom"/>
</dbReference>
<dbReference type="InterPro" id="IPR016245">
    <property type="entry name" value="Tyr_kinase_EGF/ERB/XmrK_rcpt"/>
</dbReference>
<dbReference type="PANTHER" id="PTHR24416:SF137">
    <property type="entry name" value="RECEPTOR TYROSINE-PROTEIN KINASE ERBB-2"/>
    <property type="match status" value="1"/>
</dbReference>
<dbReference type="PANTHER" id="PTHR24416">
    <property type="entry name" value="TYROSINE-PROTEIN KINASE RECEPTOR"/>
    <property type="match status" value="1"/>
</dbReference>
<dbReference type="Pfam" id="PF00757">
    <property type="entry name" value="Furin-like"/>
    <property type="match status" value="1"/>
</dbReference>
<dbReference type="Pfam" id="PF14843">
    <property type="entry name" value="GF_recep_IV"/>
    <property type="match status" value="1"/>
</dbReference>
<dbReference type="Pfam" id="PF07714">
    <property type="entry name" value="PK_Tyr_Ser-Thr"/>
    <property type="match status" value="1"/>
</dbReference>
<dbReference type="Pfam" id="PF01030">
    <property type="entry name" value="Recep_L_domain"/>
    <property type="match status" value="2"/>
</dbReference>
<dbReference type="Pfam" id="PF21314">
    <property type="entry name" value="TM_ErbB1"/>
    <property type="match status" value="1"/>
</dbReference>
<dbReference type="PIRSF" id="PIRSF000619">
    <property type="entry name" value="TyrPK_EGF-R"/>
    <property type="match status" value="1"/>
</dbReference>
<dbReference type="PRINTS" id="PR00109">
    <property type="entry name" value="TYRKINASE"/>
</dbReference>
<dbReference type="SMART" id="SM00261">
    <property type="entry name" value="FU"/>
    <property type="match status" value="4"/>
</dbReference>
<dbReference type="SMART" id="SM00219">
    <property type="entry name" value="TyrKc"/>
    <property type="match status" value="1"/>
</dbReference>
<dbReference type="SUPFAM" id="SSF57184">
    <property type="entry name" value="Growth factor receptor domain"/>
    <property type="match status" value="2"/>
</dbReference>
<dbReference type="SUPFAM" id="SSF52058">
    <property type="entry name" value="L domain-like"/>
    <property type="match status" value="2"/>
</dbReference>
<dbReference type="SUPFAM" id="SSF56112">
    <property type="entry name" value="Protein kinase-like (PK-like)"/>
    <property type="match status" value="1"/>
</dbReference>
<dbReference type="PROSITE" id="PS00107">
    <property type="entry name" value="PROTEIN_KINASE_ATP"/>
    <property type="match status" value="1"/>
</dbReference>
<dbReference type="PROSITE" id="PS50011">
    <property type="entry name" value="PROTEIN_KINASE_DOM"/>
    <property type="match status" value="1"/>
</dbReference>
<dbReference type="PROSITE" id="PS00109">
    <property type="entry name" value="PROTEIN_KINASE_TYR"/>
    <property type="match status" value="1"/>
</dbReference>
<accession>P70424</accession>
<accession>Q61525</accession>
<accession>Q6ZPE0</accession>
<comment type="function">
    <text evidence="1">Protein tyrosine kinase that is part of several cell surface receptor complexes, but that apparently needs a coreceptor for ligand binding. Essential component of a neuregulin-receptor complex, although neuregulins do not interact with it alone. GP30 is a potential ligand for this receptor. Regulates outgrowth and stabilization of peripheral microtubules (MTs). Upon ERBB2 activation, the MEMO1-RHOA-DIAPH1 signaling pathway elicits the phosphorylation and thus the inhibition of GSK3B at cell membrane. This prevents the phosphorylation of APC and CLASP2, allowing its association with the cell membrane. In turn, membrane-bound APC allows the localization of MACF1 to the cell membrane, which is required for microtubule capture and stabilization (By similarity).</text>
</comment>
<comment type="function">
    <text evidence="1">In the nucleus is involved in transcriptional regulation. Associates with the 5'-TCAAATTC-3' sequence in the PTGS2/COX-2 promoter and activates its transcription. Implicated in transcriptional activation of CDKN1A; the function involves STAT3 and SRC. Involved in the transcription of rRNA genes by RNA Pol I and enhances protein synthesis and cell growth (By similarity).</text>
</comment>
<comment type="catalytic activity">
    <reaction evidence="6">
        <text>L-tyrosyl-[protein] + ATP = O-phospho-L-tyrosyl-[protein] + ADP + H(+)</text>
        <dbReference type="Rhea" id="RHEA:10596"/>
        <dbReference type="Rhea" id="RHEA-COMP:10136"/>
        <dbReference type="Rhea" id="RHEA-COMP:20101"/>
        <dbReference type="ChEBI" id="CHEBI:15378"/>
        <dbReference type="ChEBI" id="CHEBI:30616"/>
        <dbReference type="ChEBI" id="CHEBI:46858"/>
        <dbReference type="ChEBI" id="CHEBI:61978"/>
        <dbReference type="ChEBI" id="CHEBI:456216"/>
        <dbReference type="EC" id="2.7.10.1"/>
    </reaction>
</comment>
<comment type="subunit">
    <text evidence="2 8 9 10">Homodimer. Heterodimer with EGFR, ERBB3 and ERBB4. Part of a complex with EGFR and either PIK3C2A or PIK3C2B. May interact with PIK3C2B when phosphorylated on Tyr-1197. Interacts with PLXNB1. Interacts (when phosphorylated on Tyr-1249) with MEMO1. Interacts with MUC1. Interacts (when phosphorylated on Tyr-1140) with GRB7 (via SH2 domain). Interacts (when phosphorylated on Tyr-1249) with ERBIN. Interacts with KPNB1, RANBP2, EEA1, CRM1, CLTC, PTK6, RPA194 and ACTB. Interacts (preferentially with the tyrosine phosphorylated form) with CPNE3; this interaction occurs at the cell membrane and is increased in a growth factor heregulin-dependent manner. Interacts with HSP90AA1 and HSP90AB1 in an ATP-dependent manner; the interaction suppresses ERBB2 kinase activity (By similarity). Interacts with SRC (PubMed:7542762). Interacts with MYOC (PubMed:23897819). Interacts with PRKCABP (PubMed:11278603). Interacts with SORL1; this interaction regulates ERBB2 subcellular distribution by promoting its recycling after internalization from endosomes back to the plasma membrane, hence stimulates ERBB2-mediated signaling (By similarity). Interacts with SH3BGRL (By similarity). Interacts with ROR1 (By similarity).</text>
</comment>
<comment type="interaction">
    <interactant intactId="EBI-2945468">
        <id>P70424</id>
    </interactant>
    <interactant intactId="EBI-491143">
        <id>P18762</id>
        <label>Adrb2</label>
    </interactant>
    <organismsDiffer>false</organismsDiffer>
    <experiments>3</experiments>
</comment>
<comment type="interaction">
    <interactant intactId="EBI-2945468">
        <id>P70424</id>
    </interactant>
    <interactant intactId="EBI-931878">
        <id>Q61526</id>
        <label>Erbb3</label>
    </interactant>
    <organismsDiffer>false</organismsDiffer>
    <experiments>2</experiments>
</comment>
<comment type="interaction">
    <interactant intactId="EBI-2945468">
        <id>P70424</id>
    </interactant>
    <interactant intactId="EBI-602878">
        <id>P42227</id>
        <label>Stat3</label>
    </interactant>
    <organismsDiffer>false</organismsDiffer>
    <experiments>4</experiments>
</comment>
<comment type="subcellular location">
    <subcellularLocation>
        <location evidence="2">Cell membrane</location>
        <topology evidence="2">Single-pass type I membrane protein</topology>
    </subcellularLocation>
    <subcellularLocation>
        <location evidence="2">Cell projection</location>
        <location evidence="2">Ruffle membrane</location>
        <topology evidence="2">Single-pass type I membrane protein</topology>
    </subcellularLocation>
    <subcellularLocation>
        <location evidence="2">Early endosome</location>
    </subcellularLocation>
    <subcellularLocation>
        <location evidence="2">Cytoplasm</location>
        <location evidence="2">Perinuclear region</location>
    </subcellularLocation>
    <subcellularLocation>
        <location evidence="2">Nucleus</location>
    </subcellularLocation>
    <text evidence="2">Translocation to the nucleus requires endocytosis, probably endosomal sorting and is mediated by importin beta-1/KPNB1. Also detected in endosome-to-TGN retrograde vesicles. Internalized from the cell membrane in response to EGF stimulation.</text>
</comment>
<comment type="tissue specificity">
    <text>Expressed predominantly in uterine epithelial cells. In the muscle, expression localizes to the synaptic sites of muscle fibers.</text>
</comment>
<comment type="developmental stage">
    <text>On days 1-4 of pregnancy, ERBB2 is detected primarily in epithelial cells, the day 1 uterus showing the highest accumulation. On day 5, the epithelium and the decidualizing stromal cells around the implanting blastocyst exhibit accumulation of this receptor. On days 6-8, the expression persists in the epithelium at both the implantation and interimplantation sites in addition to modest levels in the secondary decidual zone. On days 7 and 8, accumulation is also prominent in the trophoblastic giant cells.</text>
</comment>
<comment type="PTM">
    <text evidence="2">Autophosphorylated. Autophosphorylation occurs in trans, i.e. one subunit of the dimeric receptor phosphorylates tyrosine residues on the other subunit. Ligand-binding increases phosphorylation on tyrosine residues. Signaling via SEMA4C promotes phosphorylation at Tyr-1249. Dephosphorylated by PTPN12.</text>
</comment>
<comment type="similarity">
    <text evidence="5">Belongs to the protein kinase superfamily. Tyr protein kinase family. EGF receptor subfamily.</text>
</comment>
<comment type="sequence caution" evidence="11">
    <conflict type="erroneous initiation">
        <sequence resource="EMBL-CDS" id="BAC98297"/>
    </conflict>
    <text>Extended N-terminus.</text>
</comment>
<gene>
    <name type="primary">Erbb2</name>
    <name type="synonym">Kiaa3023</name>
    <name type="synonym">Neu</name>
</gene>
<feature type="signal peptide" evidence="4">
    <location>
        <begin position="1"/>
        <end position="22"/>
    </location>
</feature>
<feature type="chain" id="PRO_0000042181" description="Receptor tyrosine-protein kinase erbB-2">
    <location>
        <begin position="23"/>
        <end position="1256"/>
    </location>
</feature>
<feature type="topological domain" description="Extracellular" evidence="4">
    <location>
        <begin position="23"/>
        <end position="653"/>
    </location>
</feature>
<feature type="transmembrane region" description="Helical" evidence="4">
    <location>
        <begin position="654"/>
        <end position="674"/>
    </location>
</feature>
<feature type="topological domain" description="Cytoplasmic" evidence="4">
    <location>
        <begin position="675"/>
        <end position="1256"/>
    </location>
</feature>
<feature type="domain" description="Protein kinase" evidence="5">
    <location>
        <begin position="721"/>
        <end position="988"/>
    </location>
</feature>
<feature type="region of interest" description="Required for interaction with KPNB1 and EEA1" evidence="1">
    <location>
        <begin position="677"/>
        <end position="690"/>
    </location>
</feature>
<feature type="region of interest" description="Disordered" evidence="7">
    <location>
        <begin position="1030"/>
        <end position="1180"/>
    </location>
</feature>
<feature type="region of interest" description="Interaction with PIK3C2B" evidence="1">
    <location>
        <begin position="1196"/>
        <end position="1198"/>
    </location>
</feature>
<feature type="region of interest" description="Disordered" evidence="7">
    <location>
        <begin position="1200"/>
        <end position="1219"/>
    </location>
</feature>
<feature type="region of interest" description="Disordered" evidence="7">
    <location>
        <begin position="1224"/>
        <end position="1256"/>
    </location>
</feature>
<feature type="short sequence motif" description="Nuclear localization signal" evidence="1">
    <location>
        <begin position="677"/>
        <end position="690"/>
    </location>
</feature>
<feature type="active site" description="Proton acceptor" evidence="5 6">
    <location>
        <position position="846"/>
    </location>
</feature>
<feature type="binding site" evidence="5">
    <location>
        <begin position="727"/>
        <end position="735"/>
    </location>
    <ligand>
        <name>ATP</name>
        <dbReference type="ChEBI" id="CHEBI:30616"/>
    </ligand>
</feature>
<feature type="binding site" evidence="5">
    <location>
        <position position="754"/>
    </location>
    <ligand>
        <name>ATP</name>
        <dbReference type="ChEBI" id="CHEBI:30616"/>
    </ligand>
</feature>
<feature type="modified residue" description="Phosphotyrosine" evidence="2">
    <location>
        <position position="878"/>
    </location>
</feature>
<feature type="modified residue" description="Phosphoserine" evidence="2">
    <location>
        <position position="1055"/>
    </location>
</feature>
<feature type="modified residue" description="Phosphoserine" evidence="3">
    <location>
        <position position="1079"/>
    </location>
</feature>
<feature type="modified residue" description="Phosphoserine" evidence="2">
    <location>
        <position position="1084"/>
    </location>
</feature>
<feature type="modified residue" description="Phosphoserine" evidence="2">
    <location>
        <position position="1108"/>
    </location>
</feature>
<feature type="modified residue" description="Phosphotyrosine" evidence="2">
    <location>
        <position position="1113"/>
    </location>
</feature>
<feature type="modified residue" description="Phosphotyrosine; by autocatalysis" evidence="2">
    <location>
        <position position="1140"/>
    </location>
</feature>
<feature type="modified residue" description="Phosphothreonine" evidence="2">
    <location>
        <position position="1167"/>
    </location>
</feature>
<feature type="modified residue" description="Phosphotyrosine" evidence="2">
    <location>
        <position position="1197"/>
    </location>
</feature>
<feature type="modified residue" description="Phosphotyrosine; by autocatalysis" evidence="2">
    <location>
        <position position="1249"/>
    </location>
</feature>
<feature type="glycosylation site" description="N-linked (GlcNAc...) asparagine" evidence="4">
    <location>
        <position position="68"/>
    </location>
</feature>
<feature type="glycosylation site" description="N-linked (GlcNAc...) asparagine" evidence="4">
    <location>
        <position position="125"/>
    </location>
</feature>
<feature type="glycosylation site" description="N-linked (GlcNAc...) asparagine" evidence="4">
    <location>
        <position position="188"/>
    </location>
</feature>
<feature type="glycosylation site" description="N-linked (GlcNAc...) asparagine" evidence="4">
    <location>
        <position position="260"/>
    </location>
</feature>
<feature type="glycosylation site" description="N-linked (GlcNAc...) asparagine" evidence="4">
    <location>
        <position position="531"/>
    </location>
</feature>
<feature type="glycosylation site" description="N-linked (GlcNAc...) asparagine" evidence="4">
    <location>
        <position position="572"/>
    </location>
</feature>
<feature type="glycosylation site" description="N-linked (GlcNAc...) asparagine" evidence="4">
    <location>
        <position position="630"/>
    </location>
</feature>
<feature type="disulfide bond" evidence="2">
    <location>
        <begin position="26"/>
        <end position="53"/>
    </location>
</feature>
<feature type="disulfide bond" evidence="2">
    <location>
        <begin position="163"/>
        <end position="193"/>
    </location>
</feature>
<feature type="disulfide bond" evidence="2">
    <location>
        <begin position="196"/>
        <end position="205"/>
    </location>
</feature>
<feature type="disulfide bond" evidence="2">
    <location>
        <begin position="200"/>
        <end position="213"/>
    </location>
</feature>
<feature type="disulfide bond" evidence="2">
    <location>
        <begin position="221"/>
        <end position="228"/>
    </location>
</feature>
<feature type="disulfide bond" evidence="2">
    <location>
        <begin position="225"/>
        <end position="236"/>
    </location>
</feature>
<feature type="disulfide bond" evidence="2">
    <location>
        <begin position="237"/>
        <end position="245"/>
    </location>
</feature>
<feature type="disulfide bond" evidence="2">
    <location>
        <begin position="241"/>
        <end position="253"/>
    </location>
</feature>
<feature type="disulfide bond" evidence="2">
    <location>
        <begin position="256"/>
        <end position="265"/>
    </location>
</feature>
<feature type="disulfide bond" evidence="2">
    <location>
        <begin position="269"/>
        <end position="296"/>
    </location>
</feature>
<feature type="disulfide bond" evidence="2">
    <location>
        <begin position="300"/>
        <end position="312"/>
    </location>
</feature>
<feature type="disulfide bond" evidence="2">
    <location>
        <begin position="316"/>
        <end position="332"/>
    </location>
</feature>
<feature type="disulfide bond" evidence="2">
    <location>
        <begin position="335"/>
        <end position="339"/>
    </location>
</feature>
<feature type="disulfide bond" evidence="2">
    <location>
        <begin position="343"/>
        <end position="368"/>
    </location>
</feature>
<feature type="disulfide bond" evidence="2">
    <location>
        <begin position="476"/>
        <end position="505"/>
    </location>
</feature>
<feature type="disulfide bond" evidence="2">
    <location>
        <begin position="512"/>
        <end position="521"/>
    </location>
</feature>
<feature type="disulfide bond" evidence="2">
    <location>
        <begin position="516"/>
        <end position="529"/>
    </location>
</feature>
<feature type="disulfide bond" evidence="2">
    <location>
        <begin position="532"/>
        <end position="541"/>
    </location>
</feature>
<feature type="disulfide bond" evidence="2">
    <location>
        <begin position="545"/>
        <end position="561"/>
    </location>
</feature>
<feature type="disulfide bond" evidence="2">
    <location>
        <begin position="564"/>
        <end position="577"/>
    </location>
</feature>
<feature type="disulfide bond" evidence="2">
    <location>
        <begin position="568"/>
        <end position="585"/>
    </location>
</feature>
<feature type="disulfide bond" evidence="2">
    <location>
        <begin position="588"/>
        <end position="597"/>
    </location>
</feature>
<feature type="disulfide bond" evidence="2">
    <location>
        <begin position="601"/>
        <end position="624"/>
    </location>
</feature>
<feature type="disulfide bond" evidence="2">
    <location>
        <begin position="627"/>
        <end position="635"/>
    </location>
</feature>
<feature type="disulfide bond" evidence="2">
    <location>
        <begin position="631"/>
        <end position="643"/>
    </location>
</feature>
<keyword id="KW-0010">Activator</keyword>
<keyword id="KW-0067">ATP-binding</keyword>
<keyword id="KW-1003">Cell membrane</keyword>
<keyword id="KW-0966">Cell projection</keyword>
<keyword id="KW-0963">Cytoplasm</keyword>
<keyword id="KW-1015">Disulfide bond</keyword>
<keyword id="KW-0967">Endosome</keyword>
<keyword id="KW-0325">Glycoprotein</keyword>
<keyword id="KW-0418">Kinase</keyword>
<keyword id="KW-0472">Membrane</keyword>
<keyword id="KW-0547">Nucleotide-binding</keyword>
<keyword id="KW-0539">Nucleus</keyword>
<keyword id="KW-0597">Phosphoprotein</keyword>
<keyword id="KW-0675">Receptor</keyword>
<keyword id="KW-1185">Reference proteome</keyword>
<keyword id="KW-0732">Signal</keyword>
<keyword id="KW-0804">Transcription</keyword>
<keyword id="KW-0805">Transcription regulation</keyword>
<keyword id="KW-0808">Transferase</keyword>
<keyword id="KW-0812">Transmembrane</keyword>
<keyword id="KW-1133">Transmembrane helix</keyword>
<keyword id="KW-0829">Tyrosine-protein kinase</keyword>
<evidence type="ECO:0000250" key="1"/>
<evidence type="ECO:0000250" key="2">
    <source>
        <dbReference type="UniProtKB" id="P04626"/>
    </source>
</evidence>
<evidence type="ECO:0000250" key="3">
    <source>
        <dbReference type="UniProtKB" id="P06494"/>
    </source>
</evidence>
<evidence type="ECO:0000255" key="4"/>
<evidence type="ECO:0000255" key="5">
    <source>
        <dbReference type="PROSITE-ProRule" id="PRU00159"/>
    </source>
</evidence>
<evidence type="ECO:0000255" key="6">
    <source>
        <dbReference type="PROSITE-ProRule" id="PRU10028"/>
    </source>
</evidence>
<evidence type="ECO:0000256" key="7">
    <source>
        <dbReference type="SAM" id="MobiDB-lite"/>
    </source>
</evidence>
<evidence type="ECO:0000269" key="8">
    <source>
    </source>
</evidence>
<evidence type="ECO:0000269" key="9">
    <source>
    </source>
</evidence>
<evidence type="ECO:0000269" key="10">
    <source>
    </source>
</evidence>
<evidence type="ECO:0000305" key="11"/>